<dbReference type="EC" id="5.3.1.1" evidence="1"/>
<dbReference type="EMBL" id="CP000359">
    <property type="protein sequence ID" value="ABF45432.1"/>
    <property type="molecule type" value="Genomic_DNA"/>
</dbReference>
<dbReference type="RefSeq" id="WP_011530269.1">
    <property type="nucleotide sequence ID" value="NC_008025.1"/>
</dbReference>
<dbReference type="SMR" id="Q1IZA2"/>
<dbReference type="STRING" id="319795.Dgeo_1135"/>
<dbReference type="KEGG" id="dge:Dgeo_1135"/>
<dbReference type="eggNOG" id="COG0149">
    <property type="taxonomic scope" value="Bacteria"/>
</dbReference>
<dbReference type="HOGENOM" id="CLU_024251_2_1_0"/>
<dbReference type="UniPathway" id="UPA00109">
    <property type="reaction ID" value="UER00189"/>
</dbReference>
<dbReference type="UniPathway" id="UPA00138"/>
<dbReference type="Proteomes" id="UP000002431">
    <property type="component" value="Chromosome"/>
</dbReference>
<dbReference type="GO" id="GO:0005829">
    <property type="term" value="C:cytosol"/>
    <property type="evidence" value="ECO:0007669"/>
    <property type="project" value="TreeGrafter"/>
</dbReference>
<dbReference type="GO" id="GO:0004807">
    <property type="term" value="F:triose-phosphate isomerase activity"/>
    <property type="evidence" value="ECO:0007669"/>
    <property type="project" value="UniProtKB-UniRule"/>
</dbReference>
<dbReference type="GO" id="GO:0006094">
    <property type="term" value="P:gluconeogenesis"/>
    <property type="evidence" value="ECO:0007669"/>
    <property type="project" value="UniProtKB-UniRule"/>
</dbReference>
<dbReference type="GO" id="GO:0046166">
    <property type="term" value="P:glyceraldehyde-3-phosphate biosynthetic process"/>
    <property type="evidence" value="ECO:0007669"/>
    <property type="project" value="TreeGrafter"/>
</dbReference>
<dbReference type="GO" id="GO:0019563">
    <property type="term" value="P:glycerol catabolic process"/>
    <property type="evidence" value="ECO:0007669"/>
    <property type="project" value="TreeGrafter"/>
</dbReference>
<dbReference type="GO" id="GO:0006096">
    <property type="term" value="P:glycolytic process"/>
    <property type="evidence" value="ECO:0007669"/>
    <property type="project" value="UniProtKB-UniRule"/>
</dbReference>
<dbReference type="CDD" id="cd00311">
    <property type="entry name" value="TIM"/>
    <property type="match status" value="1"/>
</dbReference>
<dbReference type="FunFam" id="3.20.20.70:FF:000016">
    <property type="entry name" value="Triosephosphate isomerase"/>
    <property type="match status" value="1"/>
</dbReference>
<dbReference type="Gene3D" id="3.20.20.70">
    <property type="entry name" value="Aldolase class I"/>
    <property type="match status" value="1"/>
</dbReference>
<dbReference type="HAMAP" id="MF_00147_B">
    <property type="entry name" value="TIM_B"/>
    <property type="match status" value="1"/>
</dbReference>
<dbReference type="InterPro" id="IPR013785">
    <property type="entry name" value="Aldolase_TIM"/>
</dbReference>
<dbReference type="InterPro" id="IPR035990">
    <property type="entry name" value="TIM_sf"/>
</dbReference>
<dbReference type="InterPro" id="IPR022896">
    <property type="entry name" value="TrioseP_Isoase_bac/euk"/>
</dbReference>
<dbReference type="InterPro" id="IPR000652">
    <property type="entry name" value="Triosephosphate_isomerase"/>
</dbReference>
<dbReference type="InterPro" id="IPR020861">
    <property type="entry name" value="Triosephosphate_isomerase_AS"/>
</dbReference>
<dbReference type="NCBIfam" id="TIGR00419">
    <property type="entry name" value="tim"/>
    <property type="match status" value="1"/>
</dbReference>
<dbReference type="PANTHER" id="PTHR21139">
    <property type="entry name" value="TRIOSEPHOSPHATE ISOMERASE"/>
    <property type="match status" value="1"/>
</dbReference>
<dbReference type="PANTHER" id="PTHR21139:SF42">
    <property type="entry name" value="TRIOSEPHOSPHATE ISOMERASE"/>
    <property type="match status" value="1"/>
</dbReference>
<dbReference type="Pfam" id="PF00121">
    <property type="entry name" value="TIM"/>
    <property type="match status" value="1"/>
</dbReference>
<dbReference type="SUPFAM" id="SSF51351">
    <property type="entry name" value="Triosephosphate isomerase (TIM)"/>
    <property type="match status" value="1"/>
</dbReference>
<dbReference type="PROSITE" id="PS00171">
    <property type="entry name" value="TIM_1"/>
    <property type="match status" value="1"/>
</dbReference>
<dbReference type="PROSITE" id="PS51440">
    <property type="entry name" value="TIM_2"/>
    <property type="match status" value="1"/>
</dbReference>
<accession>Q1IZA2</accession>
<protein>
    <recommendedName>
        <fullName evidence="1">Triosephosphate isomerase</fullName>
        <shortName evidence="1">TIM</shortName>
        <shortName evidence="1">TPI</shortName>
        <ecNumber evidence="1">5.3.1.1</ecNumber>
    </recommendedName>
    <alternativeName>
        <fullName evidence="1">Triose-phosphate isomerase</fullName>
    </alternativeName>
</protein>
<gene>
    <name evidence="1" type="primary">tpiA</name>
    <name type="ordered locus">Dgeo_1135</name>
</gene>
<proteinExistence type="inferred from homology"/>
<sequence>MSQPLLALNWKMNKTPSEARAWAADLSSALTPGNAELAVLAPAIDLPVLAGALPAGVALGGQDVSRFAAGAYTGEISAAMLRDVGATYVIVGHSERRTYHAETDAVVAAKARQAQAAGLIPIVCVGESLDVRERGAQVDFTLDQLRGSTEGVGENLIVAYEPVWAIGTGKTATADDAEELAAAIREALAGLYTAEARSFRILYGGSVKPDNIASICAQPNVNGALVGGASLNVADVVAMSDALR</sequence>
<name>TPIS_DEIGD</name>
<comment type="function">
    <text evidence="1">Involved in the gluconeogenesis. Catalyzes stereospecifically the conversion of dihydroxyacetone phosphate (DHAP) to D-glyceraldehyde-3-phosphate (G3P).</text>
</comment>
<comment type="catalytic activity">
    <reaction evidence="1">
        <text>D-glyceraldehyde 3-phosphate = dihydroxyacetone phosphate</text>
        <dbReference type="Rhea" id="RHEA:18585"/>
        <dbReference type="ChEBI" id="CHEBI:57642"/>
        <dbReference type="ChEBI" id="CHEBI:59776"/>
        <dbReference type="EC" id="5.3.1.1"/>
    </reaction>
</comment>
<comment type="pathway">
    <text evidence="1">Carbohydrate biosynthesis; gluconeogenesis.</text>
</comment>
<comment type="pathway">
    <text evidence="1">Carbohydrate degradation; glycolysis; D-glyceraldehyde 3-phosphate from glycerone phosphate: step 1/1.</text>
</comment>
<comment type="subunit">
    <text evidence="1">Homodimer.</text>
</comment>
<comment type="subcellular location">
    <subcellularLocation>
        <location evidence="1">Cytoplasm</location>
    </subcellularLocation>
</comment>
<comment type="similarity">
    <text evidence="1">Belongs to the triosephosphate isomerase family.</text>
</comment>
<organism>
    <name type="scientific">Deinococcus geothermalis (strain DSM 11300 / CIP 105573 / AG-3a)</name>
    <dbReference type="NCBI Taxonomy" id="319795"/>
    <lineage>
        <taxon>Bacteria</taxon>
        <taxon>Thermotogati</taxon>
        <taxon>Deinococcota</taxon>
        <taxon>Deinococci</taxon>
        <taxon>Deinococcales</taxon>
        <taxon>Deinococcaceae</taxon>
        <taxon>Deinococcus</taxon>
    </lineage>
</organism>
<feature type="chain" id="PRO_0000307459" description="Triosephosphate isomerase">
    <location>
        <begin position="1"/>
        <end position="244"/>
    </location>
</feature>
<feature type="active site" description="Electrophile" evidence="1">
    <location>
        <position position="93"/>
    </location>
</feature>
<feature type="active site" description="Proton acceptor" evidence="1">
    <location>
        <position position="161"/>
    </location>
</feature>
<feature type="binding site" evidence="1">
    <location>
        <begin position="9"/>
        <end position="11"/>
    </location>
    <ligand>
        <name>substrate</name>
    </ligand>
</feature>
<feature type="binding site" evidence="1">
    <location>
        <position position="167"/>
    </location>
    <ligand>
        <name>substrate</name>
    </ligand>
</feature>
<feature type="binding site" evidence="1">
    <location>
        <position position="206"/>
    </location>
    <ligand>
        <name>substrate</name>
    </ligand>
</feature>
<feature type="binding site" evidence="1">
    <location>
        <begin position="227"/>
        <end position="228"/>
    </location>
    <ligand>
        <name>substrate</name>
    </ligand>
</feature>
<keyword id="KW-0963">Cytoplasm</keyword>
<keyword id="KW-0312">Gluconeogenesis</keyword>
<keyword id="KW-0324">Glycolysis</keyword>
<keyword id="KW-0413">Isomerase</keyword>
<evidence type="ECO:0000255" key="1">
    <source>
        <dbReference type="HAMAP-Rule" id="MF_00147"/>
    </source>
</evidence>
<reference key="1">
    <citation type="submission" date="2006-04" db="EMBL/GenBank/DDBJ databases">
        <title>Complete sequence of chromosome of Deinococcus geothermalis DSM 11300.</title>
        <authorList>
            <person name="Copeland A."/>
            <person name="Lucas S."/>
            <person name="Lapidus A."/>
            <person name="Barry K."/>
            <person name="Detter J.C."/>
            <person name="Glavina del Rio T."/>
            <person name="Hammon N."/>
            <person name="Israni S."/>
            <person name="Dalin E."/>
            <person name="Tice H."/>
            <person name="Pitluck S."/>
            <person name="Brettin T."/>
            <person name="Bruce D."/>
            <person name="Han C."/>
            <person name="Tapia R."/>
            <person name="Saunders E."/>
            <person name="Gilna P."/>
            <person name="Schmutz J."/>
            <person name="Larimer F."/>
            <person name="Land M."/>
            <person name="Hauser L."/>
            <person name="Kyrpides N."/>
            <person name="Kim E."/>
            <person name="Daly M.J."/>
            <person name="Fredrickson J.K."/>
            <person name="Makarova K.S."/>
            <person name="Gaidamakova E.K."/>
            <person name="Zhai M."/>
            <person name="Richardson P."/>
        </authorList>
    </citation>
    <scope>NUCLEOTIDE SEQUENCE [LARGE SCALE GENOMIC DNA]</scope>
    <source>
        <strain>DSM 11300 / CIP 105573 / AG-3a</strain>
    </source>
</reference>